<organism>
    <name type="scientific">Microlepia platyphylla</name>
    <name type="common">Plate fern</name>
    <name type="synonym">Davallia platyphylla</name>
    <dbReference type="NCBI Taxonomy" id="37213"/>
    <lineage>
        <taxon>Eukaryota</taxon>
        <taxon>Viridiplantae</taxon>
        <taxon>Streptophyta</taxon>
        <taxon>Embryophyta</taxon>
        <taxon>Tracheophyta</taxon>
        <taxon>Polypodiopsida</taxon>
        <taxon>Polypodiidae</taxon>
        <taxon>Polypodiales</taxon>
        <taxon>Dennstaedtiineae</taxon>
        <taxon>Dennstaedtiaceae</taxon>
        <taxon>Microlepia</taxon>
    </lineage>
</organism>
<reference key="1">
    <citation type="submission" date="2000-01" db="EMBL/GenBank/DDBJ databases">
        <authorList>
            <person name="Wolf P.G."/>
            <person name="Su P.-H."/>
        </authorList>
    </citation>
    <scope>NUCLEOTIDE SEQUENCE [GENOMIC DNA]</scope>
    <scope>SEQUENCE REVISION TO 159</scope>
</reference>
<reference key="2">
    <citation type="journal article" date="1997" name="Am. J. Bot.">
        <title>Evaluation of atpB nucleotide sequences for phylogenetic studies of ferns and other pteridophytes.</title>
        <authorList>
            <person name="Wolf P.G."/>
        </authorList>
    </citation>
    <scope>NUCLEOTIDE SEQUENCE [GENOMIC DNA] OF 157-364</scope>
    <source>
        <tissue>Frond</tissue>
    </source>
</reference>
<comment type="function">
    <text evidence="1">Produces ATP from ADP in the presence of a proton gradient across the membrane. The catalytic sites are hosted primarily by the beta subunits.</text>
</comment>
<comment type="catalytic activity">
    <reaction evidence="1">
        <text>ATP + H2O + 4 H(+)(in) = ADP + phosphate + 5 H(+)(out)</text>
        <dbReference type="Rhea" id="RHEA:57720"/>
        <dbReference type="ChEBI" id="CHEBI:15377"/>
        <dbReference type="ChEBI" id="CHEBI:15378"/>
        <dbReference type="ChEBI" id="CHEBI:30616"/>
        <dbReference type="ChEBI" id="CHEBI:43474"/>
        <dbReference type="ChEBI" id="CHEBI:456216"/>
        <dbReference type="EC" id="7.1.2.2"/>
    </reaction>
</comment>
<comment type="subunit">
    <text evidence="1">F-type ATPases have 2 components, CF(1) - the catalytic core - and CF(0) - the membrane proton channel. CF(1) has five subunits: alpha(3), beta(3), gamma(1), delta(1), epsilon(1). CF(0) has four main subunits: a(1), b(1), b'(1) and c(9-12).</text>
</comment>
<comment type="subcellular location">
    <subcellularLocation>
        <location evidence="1">Plastid</location>
        <location evidence="1">Chloroplast thylakoid membrane</location>
        <topology evidence="1">Peripheral membrane protein</topology>
    </subcellularLocation>
</comment>
<comment type="similarity">
    <text evidence="1">Belongs to the ATPase alpha/beta chains family.</text>
</comment>
<gene>
    <name evidence="1" type="primary">atpB</name>
</gene>
<sequence length="395" mass="42416">PVGETTLGRISNVLGEPVDNPGPVQSNTIFPIHRSAPAFTQLDTKLSIFETGIKVADLLAPYRRGGKIGLFGGAGVGKTVLITELINNIAKAHGGVSVSGGVGERTREGNDLYMEMKESKVINEQNISESKVALVYGQMNEPPGARMRVGSTASTMAEYFRDVNKQDVLLFIDNILRFVQAGSEVSALLGRMPPAVGYQPTLGTEMGSLQERITSTKEGSTTSIQAVYVPADDLTDPAPATTSAHLDATTVLSRGLAAKGIYPAVDPLDSTSTMSQPWIVGEEHYETAQGVKQTLQRYKELQDIIAILGLDELSEEDRLTVARARKIERFPSQPFFVAEVFTGSPGKYVSLPETIKGFQMILPGELDSLPEQAFYLVGNVDEATAKAAALQVEGQ</sequence>
<evidence type="ECO:0000255" key="1">
    <source>
        <dbReference type="HAMAP-Rule" id="MF_01347"/>
    </source>
</evidence>
<name>ATPB_MICPL</name>
<proteinExistence type="inferred from homology"/>
<dbReference type="EC" id="7.1.2.2" evidence="1"/>
<dbReference type="EMBL" id="U93832">
    <property type="protein sequence ID" value="AAB51740.2"/>
    <property type="molecule type" value="Genomic_DNA"/>
</dbReference>
<dbReference type="SMR" id="O03074"/>
<dbReference type="GO" id="GO:0009535">
    <property type="term" value="C:chloroplast thylakoid membrane"/>
    <property type="evidence" value="ECO:0007669"/>
    <property type="project" value="UniProtKB-SubCell"/>
</dbReference>
<dbReference type="GO" id="GO:0005739">
    <property type="term" value="C:mitochondrion"/>
    <property type="evidence" value="ECO:0007669"/>
    <property type="project" value="GOC"/>
</dbReference>
<dbReference type="GO" id="GO:0045259">
    <property type="term" value="C:proton-transporting ATP synthase complex"/>
    <property type="evidence" value="ECO:0007669"/>
    <property type="project" value="UniProtKB-KW"/>
</dbReference>
<dbReference type="GO" id="GO:0005524">
    <property type="term" value="F:ATP binding"/>
    <property type="evidence" value="ECO:0007669"/>
    <property type="project" value="UniProtKB-KW"/>
</dbReference>
<dbReference type="GO" id="GO:0016887">
    <property type="term" value="F:ATP hydrolysis activity"/>
    <property type="evidence" value="ECO:0007669"/>
    <property type="project" value="InterPro"/>
</dbReference>
<dbReference type="GO" id="GO:0046933">
    <property type="term" value="F:proton-transporting ATP synthase activity, rotational mechanism"/>
    <property type="evidence" value="ECO:0007669"/>
    <property type="project" value="InterPro"/>
</dbReference>
<dbReference type="GO" id="GO:0042776">
    <property type="term" value="P:proton motive force-driven mitochondrial ATP synthesis"/>
    <property type="evidence" value="ECO:0007669"/>
    <property type="project" value="TreeGrafter"/>
</dbReference>
<dbReference type="CDD" id="cd18110">
    <property type="entry name" value="ATP-synt_F1_beta_C"/>
    <property type="match status" value="1"/>
</dbReference>
<dbReference type="CDD" id="cd01133">
    <property type="entry name" value="F1-ATPase_beta_CD"/>
    <property type="match status" value="1"/>
</dbReference>
<dbReference type="FunFam" id="1.10.1140.10:FF:000001">
    <property type="entry name" value="ATP synthase subunit beta"/>
    <property type="match status" value="1"/>
</dbReference>
<dbReference type="FunFam" id="3.40.50.300:FF:000026">
    <property type="entry name" value="ATP synthase subunit beta"/>
    <property type="match status" value="1"/>
</dbReference>
<dbReference type="Gene3D" id="1.10.1140.10">
    <property type="entry name" value="Bovine Mitochondrial F1-atpase, Atp Synthase Beta Chain, Chain D, domain 3"/>
    <property type="match status" value="1"/>
</dbReference>
<dbReference type="Gene3D" id="3.40.50.300">
    <property type="entry name" value="P-loop containing nucleotide triphosphate hydrolases"/>
    <property type="match status" value="1"/>
</dbReference>
<dbReference type="HAMAP" id="MF_01347">
    <property type="entry name" value="ATP_synth_beta_bact"/>
    <property type="match status" value="1"/>
</dbReference>
<dbReference type="InterPro" id="IPR003593">
    <property type="entry name" value="AAA+_ATPase"/>
</dbReference>
<dbReference type="InterPro" id="IPR055190">
    <property type="entry name" value="ATP-synt_VA_C"/>
</dbReference>
<dbReference type="InterPro" id="IPR005722">
    <property type="entry name" value="ATP_synth_F1_bsu"/>
</dbReference>
<dbReference type="InterPro" id="IPR020003">
    <property type="entry name" value="ATPase_a/bsu_AS"/>
</dbReference>
<dbReference type="InterPro" id="IPR050053">
    <property type="entry name" value="ATPase_alpha/beta_chains"/>
</dbReference>
<dbReference type="InterPro" id="IPR000194">
    <property type="entry name" value="ATPase_F1/V1/A1_a/bsu_nucl-bd"/>
</dbReference>
<dbReference type="InterPro" id="IPR024034">
    <property type="entry name" value="ATPase_F1/V1_b/a_C"/>
</dbReference>
<dbReference type="InterPro" id="IPR027417">
    <property type="entry name" value="P-loop_NTPase"/>
</dbReference>
<dbReference type="NCBIfam" id="TIGR01039">
    <property type="entry name" value="atpD"/>
    <property type="match status" value="1"/>
</dbReference>
<dbReference type="PANTHER" id="PTHR15184">
    <property type="entry name" value="ATP SYNTHASE"/>
    <property type="match status" value="1"/>
</dbReference>
<dbReference type="PANTHER" id="PTHR15184:SF71">
    <property type="entry name" value="ATP SYNTHASE SUBUNIT BETA, MITOCHONDRIAL"/>
    <property type="match status" value="1"/>
</dbReference>
<dbReference type="Pfam" id="PF00006">
    <property type="entry name" value="ATP-synt_ab"/>
    <property type="match status" value="1"/>
</dbReference>
<dbReference type="Pfam" id="PF22919">
    <property type="entry name" value="ATP-synt_VA_C"/>
    <property type="match status" value="1"/>
</dbReference>
<dbReference type="SMART" id="SM00382">
    <property type="entry name" value="AAA"/>
    <property type="match status" value="1"/>
</dbReference>
<dbReference type="SUPFAM" id="SSF47917">
    <property type="entry name" value="C-terminal domain of alpha and beta subunits of F1 ATP synthase"/>
    <property type="match status" value="1"/>
</dbReference>
<dbReference type="SUPFAM" id="SSF52540">
    <property type="entry name" value="P-loop containing nucleoside triphosphate hydrolases"/>
    <property type="match status" value="1"/>
</dbReference>
<dbReference type="PROSITE" id="PS00152">
    <property type="entry name" value="ATPASE_ALPHA_BETA"/>
    <property type="match status" value="1"/>
</dbReference>
<feature type="chain" id="PRO_0000144526" description="ATP synthase subunit beta, chloroplastic">
    <location>
        <begin position="1" status="less than"/>
        <end position="395"/>
    </location>
</feature>
<feature type="binding site" evidence="1">
    <location>
        <begin position="72"/>
        <end position="79"/>
    </location>
    <ligand>
        <name>ATP</name>
        <dbReference type="ChEBI" id="CHEBI:30616"/>
    </ligand>
</feature>
<feature type="non-terminal residue">
    <location>
        <position position="1"/>
    </location>
</feature>
<accession>O03074</accession>
<keyword id="KW-0066">ATP synthesis</keyword>
<keyword id="KW-0067">ATP-binding</keyword>
<keyword id="KW-0139">CF(1)</keyword>
<keyword id="KW-0150">Chloroplast</keyword>
<keyword id="KW-0375">Hydrogen ion transport</keyword>
<keyword id="KW-0406">Ion transport</keyword>
<keyword id="KW-0472">Membrane</keyword>
<keyword id="KW-0547">Nucleotide-binding</keyword>
<keyword id="KW-0934">Plastid</keyword>
<keyword id="KW-0793">Thylakoid</keyword>
<keyword id="KW-1278">Translocase</keyword>
<keyword id="KW-0813">Transport</keyword>
<protein>
    <recommendedName>
        <fullName evidence="1">ATP synthase subunit beta, chloroplastic</fullName>
        <ecNumber evidence="1">7.1.2.2</ecNumber>
    </recommendedName>
    <alternativeName>
        <fullName evidence="1">ATP synthase F1 sector subunit beta</fullName>
    </alternativeName>
    <alternativeName>
        <fullName evidence="1">F-ATPase subunit beta</fullName>
    </alternativeName>
</protein>
<geneLocation type="chloroplast"/>